<protein>
    <recommendedName>
        <fullName evidence="1">RNA-binding protein Hfq</fullName>
    </recommendedName>
</protein>
<keyword id="KW-1185">Reference proteome</keyword>
<keyword id="KW-0694">RNA-binding</keyword>
<keyword id="KW-0346">Stress response</keyword>
<feature type="chain" id="PRO_1000190343" description="RNA-binding protein Hfq">
    <location>
        <begin position="1"/>
        <end position="96"/>
    </location>
</feature>
<feature type="domain" description="Sm" evidence="2">
    <location>
        <begin position="9"/>
        <end position="68"/>
    </location>
</feature>
<feature type="region of interest" description="Disordered" evidence="3">
    <location>
        <begin position="64"/>
        <end position="96"/>
    </location>
</feature>
<feature type="compositionally biased region" description="Polar residues" evidence="3">
    <location>
        <begin position="70"/>
        <end position="96"/>
    </location>
</feature>
<gene>
    <name evidence="1" type="primary">hfq</name>
    <name type="ordered locus">PMI3365</name>
</gene>
<proteinExistence type="inferred from homology"/>
<accession>B4F266</accession>
<name>HFQ_PROMH</name>
<comment type="function">
    <text evidence="1">RNA chaperone that binds small regulatory RNA (sRNAs) and mRNAs to facilitate mRNA translational regulation in response to envelope stress, environmental stress and changes in metabolite concentrations. Also binds with high specificity to tRNAs.</text>
</comment>
<comment type="subunit">
    <text evidence="1">Homohexamer.</text>
</comment>
<comment type="similarity">
    <text evidence="1">Belongs to the Hfq family.</text>
</comment>
<dbReference type="EMBL" id="AM942759">
    <property type="protein sequence ID" value="CAR46601.1"/>
    <property type="molecule type" value="Genomic_DNA"/>
</dbReference>
<dbReference type="RefSeq" id="WP_004246291.1">
    <property type="nucleotide sequence ID" value="NC_010554.1"/>
</dbReference>
<dbReference type="SMR" id="B4F266"/>
<dbReference type="EnsemblBacteria" id="CAR46601">
    <property type="protein sequence ID" value="CAR46601"/>
    <property type="gene ID" value="PMI3365"/>
</dbReference>
<dbReference type="GeneID" id="6802090"/>
<dbReference type="KEGG" id="pmr:PMI3365"/>
<dbReference type="eggNOG" id="COG1923">
    <property type="taxonomic scope" value="Bacteria"/>
</dbReference>
<dbReference type="HOGENOM" id="CLU_113688_2_1_6"/>
<dbReference type="Proteomes" id="UP000008319">
    <property type="component" value="Chromosome"/>
</dbReference>
<dbReference type="GO" id="GO:0005829">
    <property type="term" value="C:cytosol"/>
    <property type="evidence" value="ECO:0007669"/>
    <property type="project" value="TreeGrafter"/>
</dbReference>
<dbReference type="GO" id="GO:0003723">
    <property type="term" value="F:RNA binding"/>
    <property type="evidence" value="ECO:0007669"/>
    <property type="project" value="UniProtKB-UniRule"/>
</dbReference>
<dbReference type="GO" id="GO:0006355">
    <property type="term" value="P:regulation of DNA-templated transcription"/>
    <property type="evidence" value="ECO:0007669"/>
    <property type="project" value="InterPro"/>
</dbReference>
<dbReference type="GO" id="GO:0043487">
    <property type="term" value="P:regulation of RNA stability"/>
    <property type="evidence" value="ECO:0007669"/>
    <property type="project" value="TreeGrafter"/>
</dbReference>
<dbReference type="GO" id="GO:0045974">
    <property type="term" value="P:regulation of translation, ncRNA-mediated"/>
    <property type="evidence" value="ECO:0007669"/>
    <property type="project" value="TreeGrafter"/>
</dbReference>
<dbReference type="CDD" id="cd01716">
    <property type="entry name" value="Hfq"/>
    <property type="match status" value="1"/>
</dbReference>
<dbReference type="FunFam" id="2.30.30.100:FF:000001">
    <property type="entry name" value="RNA-binding protein Hfq"/>
    <property type="match status" value="1"/>
</dbReference>
<dbReference type="Gene3D" id="2.30.30.100">
    <property type="match status" value="1"/>
</dbReference>
<dbReference type="HAMAP" id="MF_00436">
    <property type="entry name" value="Hfq"/>
    <property type="match status" value="1"/>
</dbReference>
<dbReference type="InterPro" id="IPR005001">
    <property type="entry name" value="Hfq"/>
</dbReference>
<dbReference type="InterPro" id="IPR010920">
    <property type="entry name" value="LSM_dom_sf"/>
</dbReference>
<dbReference type="InterPro" id="IPR047575">
    <property type="entry name" value="Sm"/>
</dbReference>
<dbReference type="NCBIfam" id="TIGR02383">
    <property type="entry name" value="Hfq"/>
    <property type="match status" value="1"/>
</dbReference>
<dbReference type="NCBIfam" id="NF001602">
    <property type="entry name" value="PRK00395.1"/>
    <property type="match status" value="1"/>
</dbReference>
<dbReference type="PANTHER" id="PTHR34772">
    <property type="entry name" value="RNA-BINDING PROTEIN HFQ"/>
    <property type="match status" value="1"/>
</dbReference>
<dbReference type="PANTHER" id="PTHR34772:SF1">
    <property type="entry name" value="RNA-BINDING PROTEIN HFQ"/>
    <property type="match status" value="1"/>
</dbReference>
<dbReference type="Pfam" id="PF17209">
    <property type="entry name" value="Hfq"/>
    <property type="match status" value="1"/>
</dbReference>
<dbReference type="SUPFAM" id="SSF50182">
    <property type="entry name" value="Sm-like ribonucleoproteins"/>
    <property type="match status" value="1"/>
</dbReference>
<dbReference type="PROSITE" id="PS52002">
    <property type="entry name" value="SM"/>
    <property type="match status" value="1"/>
</dbReference>
<evidence type="ECO:0000255" key="1">
    <source>
        <dbReference type="HAMAP-Rule" id="MF_00436"/>
    </source>
</evidence>
<evidence type="ECO:0000255" key="2">
    <source>
        <dbReference type="PROSITE-ProRule" id="PRU01346"/>
    </source>
</evidence>
<evidence type="ECO:0000256" key="3">
    <source>
        <dbReference type="SAM" id="MobiDB-lite"/>
    </source>
</evidence>
<sequence length="96" mass="10514">MAKGQSLQDPFLNALRRERVPVSIYLVNGIKLQGQIESFDQFVILLKNTVSQMVYKHAISTVVPSRPVSHHSNTGTNQAGTNYSGGNATQQDDVAE</sequence>
<reference key="1">
    <citation type="journal article" date="2008" name="J. Bacteriol.">
        <title>Complete genome sequence of uropathogenic Proteus mirabilis, a master of both adherence and motility.</title>
        <authorList>
            <person name="Pearson M.M."/>
            <person name="Sebaihia M."/>
            <person name="Churcher C."/>
            <person name="Quail M.A."/>
            <person name="Seshasayee A.S."/>
            <person name="Luscombe N.M."/>
            <person name="Abdellah Z."/>
            <person name="Arrosmith C."/>
            <person name="Atkin B."/>
            <person name="Chillingworth T."/>
            <person name="Hauser H."/>
            <person name="Jagels K."/>
            <person name="Moule S."/>
            <person name="Mungall K."/>
            <person name="Norbertczak H."/>
            <person name="Rabbinowitsch E."/>
            <person name="Walker D."/>
            <person name="Whithead S."/>
            <person name="Thomson N.R."/>
            <person name="Rather P.N."/>
            <person name="Parkhill J."/>
            <person name="Mobley H.L.T."/>
        </authorList>
    </citation>
    <scope>NUCLEOTIDE SEQUENCE [LARGE SCALE GENOMIC DNA]</scope>
    <source>
        <strain>HI4320</strain>
    </source>
</reference>
<organism>
    <name type="scientific">Proteus mirabilis (strain HI4320)</name>
    <dbReference type="NCBI Taxonomy" id="529507"/>
    <lineage>
        <taxon>Bacteria</taxon>
        <taxon>Pseudomonadati</taxon>
        <taxon>Pseudomonadota</taxon>
        <taxon>Gammaproteobacteria</taxon>
        <taxon>Enterobacterales</taxon>
        <taxon>Morganellaceae</taxon>
        <taxon>Proteus</taxon>
    </lineage>
</organism>